<proteinExistence type="inferred from homology"/>
<organism>
    <name type="scientific">Synechococcus sp. (strain CC9902)</name>
    <dbReference type="NCBI Taxonomy" id="316279"/>
    <lineage>
        <taxon>Bacteria</taxon>
        <taxon>Bacillati</taxon>
        <taxon>Cyanobacteriota</taxon>
        <taxon>Cyanophyceae</taxon>
        <taxon>Synechococcales</taxon>
        <taxon>Synechococcaceae</taxon>
        <taxon>Synechococcus</taxon>
    </lineage>
</organism>
<comment type="function">
    <text evidence="1">Found at the monomer-monomer interface of the photosystem II (PS II) dimer, plays a role in assembly and dimerization of PSII. PSII is a light-driven water plastoquinone oxidoreductase, using light energy to abstract electrons from H(2)O, generating a proton gradient subsequently used for ATP formation.</text>
</comment>
<comment type="subunit">
    <text evidence="1">PSII is composed of 1 copy each of membrane proteins PsbA, PsbB, PsbC, PsbD, PsbE, PsbF, PsbH, PsbI, PsbJ, PsbK, PsbL, PsbM, PsbT, PsbX, PsbY, PsbZ, Psb30/Ycf12, peripheral proteins PsbO, CyanoQ (PsbQ), PsbU, PsbV and a large number of cofactors. It forms dimeric complexes.</text>
</comment>
<comment type="subcellular location">
    <subcellularLocation>
        <location evidence="1">Cellular thylakoid membrane</location>
        <topology evidence="1">Single-pass membrane protein</topology>
    </subcellularLocation>
</comment>
<comment type="similarity">
    <text evidence="1">Belongs to the PsbT family.</text>
</comment>
<accession>Q3AWF0</accession>
<name>PSBT_SYNS9</name>
<protein>
    <recommendedName>
        <fullName evidence="1">Photosystem II reaction center protein T</fullName>
        <shortName evidence="1">PSII-T</shortName>
    </recommendedName>
</protein>
<reference key="1">
    <citation type="submission" date="2005-08" db="EMBL/GenBank/DDBJ databases">
        <title>Complete sequence of Synechococcus sp. CC9902.</title>
        <authorList>
            <person name="Copeland A."/>
            <person name="Lucas S."/>
            <person name="Lapidus A."/>
            <person name="Barry K."/>
            <person name="Detter J.C."/>
            <person name="Glavina T."/>
            <person name="Hammon N."/>
            <person name="Israni S."/>
            <person name="Pitluck S."/>
            <person name="Martinez M."/>
            <person name="Schmutz J."/>
            <person name="Larimer F."/>
            <person name="Land M."/>
            <person name="Kyrpides N."/>
            <person name="Ivanova N."/>
            <person name="Richardson P."/>
        </authorList>
    </citation>
    <scope>NUCLEOTIDE SEQUENCE [LARGE SCALE GENOMIC DNA]</scope>
    <source>
        <strain>CC9902</strain>
    </source>
</reference>
<evidence type="ECO:0000255" key="1">
    <source>
        <dbReference type="HAMAP-Rule" id="MF_00808"/>
    </source>
</evidence>
<sequence>MESFAYVLILTFAIATLFFAIAFRDPPKIGK</sequence>
<dbReference type="EMBL" id="CP000097">
    <property type="protein sequence ID" value="ABB26822.1"/>
    <property type="molecule type" value="Genomic_DNA"/>
</dbReference>
<dbReference type="RefSeq" id="WP_011360624.1">
    <property type="nucleotide sequence ID" value="NC_007513.1"/>
</dbReference>
<dbReference type="SMR" id="Q3AWF0"/>
<dbReference type="STRING" id="316279.Syncc9902_1865"/>
<dbReference type="KEGG" id="sye:Syncc9902_1865"/>
<dbReference type="eggNOG" id="ENOG50323KB">
    <property type="taxonomic scope" value="Bacteria"/>
</dbReference>
<dbReference type="HOGENOM" id="CLU_217078_1_0_3"/>
<dbReference type="Proteomes" id="UP000002712">
    <property type="component" value="Chromosome"/>
</dbReference>
<dbReference type="GO" id="GO:0009539">
    <property type="term" value="C:photosystem II reaction center"/>
    <property type="evidence" value="ECO:0007669"/>
    <property type="project" value="InterPro"/>
</dbReference>
<dbReference type="GO" id="GO:0031676">
    <property type="term" value="C:plasma membrane-derived thylakoid membrane"/>
    <property type="evidence" value="ECO:0007669"/>
    <property type="project" value="UniProtKB-SubCell"/>
</dbReference>
<dbReference type="GO" id="GO:0015979">
    <property type="term" value="P:photosynthesis"/>
    <property type="evidence" value="ECO:0007669"/>
    <property type="project" value="UniProtKB-UniRule"/>
</dbReference>
<dbReference type="HAMAP" id="MF_00808">
    <property type="entry name" value="PSII_PsbT"/>
    <property type="match status" value="1"/>
</dbReference>
<dbReference type="InterPro" id="IPR001743">
    <property type="entry name" value="PSII_PsbT"/>
</dbReference>
<dbReference type="InterPro" id="IPR037268">
    <property type="entry name" value="PSII_PsbT_sf"/>
</dbReference>
<dbReference type="NCBIfam" id="NF008825">
    <property type="entry name" value="PRK11875.1"/>
    <property type="match status" value="1"/>
</dbReference>
<dbReference type="Pfam" id="PF01405">
    <property type="entry name" value="PsbT"/>
    <property type="match status" value="1"/>
</dbReference>
<dbReference type="SUPFAM" id="SSF161029">
    <property type="entry name" value="Photosystem II reaction center protein T, PsbT"/>
    <property type="match status" value="1"/>
</dbReference>
<feature type="chain" id="PRO_1000047105" description="Photosystem II reaction center protein T">
    <location>
        <begin position="1"/>
        <end position="31"/>
    </location>
</feature>
<feature type="transmembrane region" description="Helical" evidence="1">
    <location>
        <begin position="3"/>
        <end position="23"/>
    </location>
</feature>
<gene>
    <name evidence="1" type="primary">psbT</name>
    <name type="ordered locus">Syncc9902_1865</name>
</gene>
<keyword id="KW-0472">Membrane</keyword>
<keyword id="KW-0602">Photosynthesis</keyword>
<keyword id="KW-0604">Photosystem II</keyword>
<keyword id="KW-1185">Reference proteome</keyword>
<keyword id="KW-0793">Thylakoid</keyword>
<keyword id="KW-0812">Transmembrane</keyword>
<keyword id="KW-1133">Transmembrane helix</keyword>